<dbReference type="EMBL" id="CP000316">
    <property type="protein sequence ID" value="ABE45613.1"/>
    <property type="molecule type" value="Genomic_DNA"/>
</dbReference>
<dbReference type="RefSeq" id="WP_011484604.1">
    <property type="nucleotide sequence ID" value="NC_007948.1"/>
</dbReference>
<dbReference type="SMR" id="Q126C9"/>
<dbReference type="STRING" id="296591.Bpro_3713"/>
<dbReference type="KEGG" id="pol:Bpro_3713"/>
<dbReference type="eggNOG" id="COG3022">
    <property type="taxonomic scope" value="Bacteria"/>
</dbReference>
<dbReference type="HOGENOM" id="CLU_061989_0_0_4"/>
<dbReference type="OrthoDB" id="9777133at2"/>
<dbReference type="Proteomes" id="UP000001983">
    <property type="component" value="Chromosome"/>
</dbReference>
<dbReference type="GO" id="GO:0005829">
    <property type="term" value="C:cytosol"/>
    <property type="evidence" value="ECO:0007669"/>
    <property type="project" value="TreeGrafter"/>
</dbReference>
<dbReference type="GO" id="GO:0033194">
    <property type="term" value="P:response to hydroperoxide"/>
    <property type="evidence" value="ECO:0007669"/>
    <property type="project" value="TreeGrafter"/>
</dbReference>
<dbReference type="HAMAP" id="MF_00652">
    <property type="entry name" value="UPF0246"/>
    <property type="match status" value="1"/>
</dbReference>
<dbReference type="InterPro" id="IPR005583">
    <property type="entry name" value="YaaA"/>
</dbReference>
<dbReference type="NCBIfam" id="NF002542">
    <property type="entry name" value="PRK02101.1-3"/>
    <property type="match status" value="1"/>
</dbReference>
<dbReference type="PANTHER" id="PTHR30283:SF4">
    <property type="entry name" value="PEROXIDE STRESS RESISTANCE PROTEIN YAAA"/>
    <property type="match status" value="1"/>
</dbReference>
<dbReference type="PANTHER" id="PTHR30283">
    <property type="entry name" value="PEROXIDE STRESS RESPONSE PROTEIN YAAA"/>
    <property type="match status" value="1"/>
</dbReference>
<dbReference type="Pfam" id="PF03883">
    <property type="entry name" value="H2O2_YaaD"/>
    <property type="match status" value="1"/>
</dbReference>
<evidence type="ECO:0000255" key="1">
    <source>
        <dbReference type="HAMAP-Rule" id="MF_00652"/>
    </source>
</evidence>
<reference key="1">
    <citation type="journal article" date="2008" name="Appl. Environ. Microbiol.">
        <title>The genome of Polaromonas sp. strain JS666: insights into the evolution of a hydrocarbon- and xenobiotic-degrading bacterium, and features of relevance to biotechnology.</title>
        <authorList>
            <person name="Mattes T.E."/>
            <person name="Alexander A.K."/>
            <person name="Richardson P.M."/>
            <person name="Munk A.C."/>
            <person name="Han C.S."/>
            <person name="Stothard P."/>
            <person name="Coleman N.V."/>
        </authorList>
    </citation>
    <scope>NUCLEOTIDE SEQUENCE [LARGE SCALE GENOMIC DNA]</scope>
    <source>
        <strain>JS666 / ATCC BAA-500</strain>
    </source>
</reference>
<gene>
    <name type="ordered locus">Bpro_3713</name>
</gene>
<proteinExistence type="inferred from homology"/>
<keyword id="KW-1185">Reference proteome</keyword>
<organism>
    <name type="scientific">Polaromonas sp. (strain JS666 / ATCC BAA-500)</name>
    <dbReference type="NCBI Taxonomy" id="296591"/>
    <lineage>
        <taxon>Bacteria</taxon>
        <taxon>Pseudomonadati</taxon>
        <taxon>Pseudomonadota</taxon>
        <taxon>Betaproteobacteria</taxon>
        <taxon>Burkholderiales</taxon>
        <taxon>Comamonadaceae</taxon>
        <taxon>Polaromonas</taxon>
    </lineage>
</organism>
<feature type="chain" id="PRO_0000262037" description="UPF0246 protein Bpro_3713">
    <location>
        <begin position="1"/>
        <end position="258"/>
    </location>
</feature>
<name>Y3713_POLSJ</name>
<comment type="similarity">
    <text evidence="1">Belongs to the UPF0246 family.</text>
</comment>
<protein>
    <recommendedName>
        <fullName evidence="1">UPF0246 protein Bpro_3713</fullName>
    </recommendedName>
</protein>
<accession>Q126C9</accession>
<sequence length="258" mass="29027">MLFLLSPAKSLDYDTPPHVSTYTKPLFTRQSAELIDVLQTKTPQQISTLMKLSDALSGLNVARYQAWSPKFTAKNSKQAVLAFNGDVYGGLDAKTLSEQQLGWAQEHVCILSGLYGVLRPLDWMQPYRLEMGTALATGQGKNLYQFWGSQIADYLNQRAAAHTSPVIVNLASEEYFKAVDRKALKARVVSCVFEEFRAGKYKIISFMAKRARGLMVRYATEHKLLTVRKLEGFDAEGYRFDPAASQADRLVFRRRQAA</sequence>